<keyword id="KW-0963">Cytoplasm</keyword>
<keyword id="KW-0489">Methyltransferase</keyword>
<keyword id="KW-0698">rRNA processing</keyword>
<keyword id="KW-0949">S-adenosyl-L-methionine</keyword>
<keyword id="KW-0808">Transferase</keyword>
<evidence type="ECO:0000255" key="1">
    <source>
        <dbReference type="HAMAP-Rule" id="MF_01547"/>
    </source>
</evidence>
<comment type="function">
    <text evidence="1">Specifically methylates the uridine in position 2552 of 23S rRNA at the 2'-O position of the ribose in the fully assembled 50S ribosomal subunit.</text>
</comment>
<comment type="catalytic activity">
    <reaction evidence="1">
        <text>uridine(2552) in 23S rRNA + S-adenosyl-L-methionine = 2'-O-methyluridine(2552) in 23S rRNA + S-adenosyl-L-homocysteine + H(+)</text>
        <dbReference type="Rhea" id="RHEA:42720"/>
        <dbReference type="Rhea" id="RHEA-COMP:10202"/>
        <dbReference type="Rhea" id="RHEA-COMP:10203"/>
        <dbReference type="ChEBI" id="CHEBI:15378"/>
        <dbReference type="ChEBI" id="CHEBI:57856"/>
        <dbReference type="ChEBI" id="CHEBI:59789"/>
        <dbReference type="ChEBI" id="CHEBI:65315"/>
        <dbReference type="ChEBI" id="CHEBI:74478"/>
        <dbReference type="EC" id="2.1.1.166"/>
    </reaction>
</comment>
<comment type="subcellular location">
    <subcellularLocation>
        <location evidence="1">Cytoplasm</location>
    </subcellularLocation>
</comment>
<comment type="similarity">
    <text evidence="1">Belongs to the class I-like SAM-binding methyltransferase superfamily. RNA methyltransferase RlmE family.</text>
</comment>
<organism>
    <name type="scientific">Rhodopseudomonas palustris (strain BisB18)</name>
    <dbReference type="NCBI Taxonomy" id="316056"/>
    <lineage>
        <taxon>Bacteria</taxon>
        <taxon>Pseudomonadati</taxon>
        <taxon>Pseudomonadota</taxon>
        <taxon>Alphaproteobacteria</taxon>
        <taxon>Hyphomicrobiales</taxon>
        <taxon>Nitrobacteraceae</taxon>
        <taxon>Rhodopseudomonas</taxon>
    </lineage>
</organism>
<reference key="1">
    <citation type="submission" date="2006-03" db="EMBL/GenBank/DDBJ databases">
        <title>Complete sequence of Rhodopseudomonas palustris BisB18.</title>
        <authorList>
            <consortium name="US DOE Joint Genome Institute"/>
            <person name="Copeland A."/>
            <person name="Lucas S."/>
            <person name="Lapidus A."/>
            <person name="Barry K."/>
            <person name="Detter J.C."/>
            <person name="Glavina del Rio T."/>
            <person name="Hammon N."/>
            <person name="Israni S."/>
            <person name="Dalin E."/>
            <person name="Tice H."/>
            <person name="Pitluck S."/>
            <person name="Chain P."/>
            <person name="Malfatti S."/>
            <person name="Shin M."/>
            <person name="Vergez L."/>
            <person name="Schmutz J."/>
            <person name="Larimer F."/>
            <person name="Land M."/>
            <person name="Hauser L."/>
            <person name="Pelletier D.A."/>
            <person name="Kyrpides N."/>
            <person name="Anderson I."/>
            <person name="Oda Y."/>
            <person name="Harwood C.S."/>
            <person name="Richardson P."/>
        </authorList>
    </citation>
    <scope>NUCLEOTIDE SEQUENCE [LARGE SCALE GENOMIC DNA]</scope>
    <source>
        <strain>BisB18</strain>
    </source>
</reference>
<sequence length="238" mass="25514">MAKDTTGRLRVTVKSAGRLKLSSKLWLERQLNDPYVAQAKRDGLRSRAAYKLIEIDDKYHFLKPGIAVVDLGAAPGGWSQVAAKRVGAADGRGKVVAIDLLEMPEIVGVDFAQLDFLHAEAPAKLLSMIGGKVDVVLSDMAANTTGHRKTDQLRIVGLVEDAAAFACDVLKPGGTFVAKVFQSGADATLVTQLKRDFVTVKHVKPASSRKDSSERYVLAMGFRGVPTTHDADAPMATS</sequence>
<gene>
    <name evidence="1" type="primary">rlmE</name>
    <name evidence="1" type="synonym">ftsJ</name>
    <name evidence="1" type="synonym">rrmJ</name>
    <name type="ordered locus">RPC_3081</name>
</gene>
<accession>Q212R3</accession>
<dbReference type="EC" id="2.1.1.166" evidence="1"/>
<dbReference type="EMBL" id="CP000301">
    <property type="protein sequence ID" value="ABD88623.1"/>
    <property type="molecule type" value="Genomic_DNA"/>
</dbReference>
<dbReference type="SMR" id="Q212R3"/>
<dbReference type="STRING" id="316056.RPC_3081"/>
<dbReference type="KEGG" id="rpc:RPC_3081"/>
<dbReference type="eggNOG" id="COG0293">
    <property type="taxonomic scope" value="Bacteria"/>
</dbReference>
<dbReference type="HOGENOM" id="CLU_009422_4_0_5"/>
<dbReference type="OrthoDB" id="9790080at2"/>
<dbReference type="GO" id="GO:0005737">
    <property type="term" value="C:cytoplasm"/>
    <property type="evidence" value="ECO:0007669"/>
    <property type="project" value="UniProtKB-SubCell"/>
</dbReference>
<dbReference type="GO" id="GO:0008650">
    <property type="term" value="F:rRNA (uridine-2'-O-)-methyltransferase activity"/>
    <property type="evidence" value="ECO:0007669"/>
    <property type="project" value="UniProtKB-UniRule"/>
</dbReference>
<dbReference type="FunFam" id="3.40.50.150:FF:000005">
    <property type="entry name" value="Ribosomal RNA large subunit methyltransferase E"/>
    <property type="match status" value="1"/>
</dbReference>
<dbReference type="Gene3D" id="3.40.50.150">
    <property type="entry name" value="Vaccinia Virus protein VP39"/>
    <property type="match status" value="1"/>
</dbReference>
<dbReference type="HAMAP" id="MF_01547">
    <property type="entry name" value="RNA_methyltr_E"/>
    <property type="match status" value="1"/>
</dbReference>
<dbReference type="InterPro" id="IPR050082">
    <property type="entry name" value="RNA_methyltr_RlmE"/>
</dbReference>
<dbReference type="InterPro" id="IPR002877">
    <property type="entry name" value="RNA_MeTrfase_FtsJ_dom"/>
</dbReference>
<dbReference type="InterPro" id="IPR015507">
    <property type="entry name" value="rRNA-MeTfrase_E"/>
</dbReference>
<dbReference type="InterPro" id="IPR029063">
    <property type="entry name" value="SAM-dependent_MTases_sf"/>
</dbReference>
<dbReference type="PANTHER" id="PTHR10920">
    <property type="entry name" value="RIBOSOMAL RNA METHYLTRANSFERASE"/>
    <property type="match status" value="1"/>
</dbReference>
<dbReference type="PANTHER" id="PTHR10920:SF18">
    <property type="entry name" value="RRNA METHYLTRANSFERASE 2, MITOCHONDRIAL"/>
    <property type="match status" value="1"/>
</dbReference>
<dbReference type="Pfam" id="PF01728">
    <property type="entry name" value="FtsJ"/>
    <property type="match status" value="1"/>
</dbReference>
<dbReference type="PIRSF" id="PIRSF005461">
    <property type="entry name" value="23S_rRNA_mtase"/>
    <property type="match status" value="1"/>
</dbReference>
<dbReference type="SUPFAM" id="SSF53335">
    <property type="entry name" value="S-adenosyl-L-methionine-dependent methyltransferases"/>
    <property type="match status" value="1"/>
</dbReference>
<feature type="chain" id="PRO_0000282787" description="Ribosomal RNA large subunit methyltransferase E">
    <location>
        <begin position="1"/>
        <end position="238"/>
    </location>
</feature>
<feature type="active site" description="Proton acceptor" evidence="1">
    <location>
        <position position="179"/>
    </location>
</feature>
<feature type="binding site" evidence="1">
    <location>
        <position position="76"/>
    </location>
    <ligand>
        <name>S-adenosyl-L-methionine</name>
        <dbReference type="ChEBI" id="CHEBI:59789"/>
    </ligand>
</feature>
<feature type="binding site" evidence="1">
    <location>
        <position position="78"/>
    </location>
    <ligand>
        <name>S-adenosyl-L-methionine</name>
        <dbReference type="ChEBI" id="CHEBI:59789"/>
    </ligand>
</feature>
<feature type="binding site" evidence="1">
    <location>
        <position position="99"/>
    </location>
    <ligand>
        <name>S-adenosyl-L-methionine</name>
        <dbReference type="ChEBI" id="CHEBI:59789"/>
    </ligand>
</feature>
<feature type="binding site" evidence="1">
    <location>
        <position position="115"/>
    </location>
    <ligand>
        <name>S-adenosyl-L-methionine</name>
        <dbReference type="ChEBI" id="CHEBI:59789"/>
    </ligand>
</feature>
<feature type="binding site" evidence="1">
    <location>
        <position position="139"/>
    </location>
    <ligand>
        <name>S-adenosyl-L-methionine</name>
        <dbReference type="ChEBI" id="CHEBI:59789"/>
    </ligand>
</feature>
<proteinExistence type="inferred from homology"/>
<name>RLME_RHOPB</name>
<protein>
    <recommendedName>
        <fullName evidence="1">Ribosomal RNA large subunit methyltransferase E</fullName>
        <ecNumber evidence="1">2.1.1.166</ecNumber>
    </recommendedName>
    <alternativeName>
        <fullName evidence="1">23S rRNA Um2552 methyltransferase</fullName>
    </alternativeName>
    <alternativeName>
        <fullName evidence="1">rRNA (uridine-2'-O-)-methyltransferase</fullName>
    </alternativeName>
</protein>